<dbReference type="EMBL" id="CP001147">
    <property type="protein sequence ID" value="ACI20513.1"/>
    <property type="molecule type" value="Genomic_DNA"/>
</dbReference>
<dbReference type="RefSeq" id="WP_012545249.1">
    <property type="nucleotide sequence ID" value="NC_011296.1"/>
</dbReference>
<dbReference type="RefSeq" id="YP_002249846.1">
    <property type="nucleotide sequence ID" value="NC_011296.1"/>
</dbReference>
<dbReference type="SMR" id="B5YIX2"/>
<dbReference type="FunCoup" id="B5YIX2">
    <property type="interactions" value="73"/>
</dbReference>
<dbReference type="STRING" id="289376.THEYE_A2059"/>
<dbReference type="EnsemblBacteria" id="ACI20513">
    <property type="protein sequence ID" value="ACI20513"/>
    <property type="gene ID" value="THEYE_A2059"/>
</dbReference>
<dbReference type="KEGG" id="tye:THEYE_A2059"/>
<dbReference type="PATRIC" id="fig|289376.4.peg.2007"/>
<dbReference type="eggNOG" id="COG2063">
    <property type="taxonomic scope" value="Bacteria"/>
</dbReference>
<dbReference type="HOGENOM" id="CLU_069313_1_1_0"/>
<dbReference type="InParanoid" id="B5YIX2"/>
<dbReference type="OrthoDB" id="9789227at2"/>
<dbReference type="Proteomes" id="UP000000718">
    <property type="component" value="Chromosome"/>
</dbReference>
<dbReference type="GO" id="GO:0009427">
    <property type="term" value="C:bacterial-type flagellum basal body, distal rod, L ring"/>
    <property type="evidence" value="ECO:0007669"/>
    <property type="project" value="InterPro"/>
</dbReference>
<dbReference type="GO" id="GO:0009279">
    <property type="term" value="C:cell outer membrane"/>
    <property type="evidence" value="ECO:0007669"/>
    <property type="project" value="UniProtKB-SubCell"/>
</dbReference>
<dbReference type="GO" id="GO:0003774">
    <property type="term" value="F:cytoskeletal motor activity"/>
    <property type="evidence" value="ECO:0007669"/>
    <property type="project" value="InterPro"/>
</dbReference>
<dbReference type="GO" id="GO:0071973">
    <property type="term" value="P:bacterial-type flagellum-dependent cell motility"/>
    <property type="evidence" value="ECO:0007669"/>
    <property type="project" value="InterPro"/>
</dbReference>
<dbReference type="HAMAP" id="MF_00415">
    <property type="entry name" value="FlgH"/>
    <property type="match status" value="1"/>
</dbReference>
<dbReference type="InterPro" id="IPR000527">
    <property type="entry name" value="Flag_Lring"/>
</dbReference>
<dbReference type="PANTHER" id="PTHR34933">
    <property type="entry name" value="FLAGELLAR L-RING PROTEIN"/>
    <property type="match status" value="1"/>
</dbReference>
<dbReference type="PANTHER" id="PTHR34933:SF1">
    <property type="entry name" value="FLAGELLAR L-RING PROTEIN"/>
    <property type="match status" value="1"/>
</dbReference>
<dbReference type="Pfam" id="PF02107">
    <property type="entry name" value="FlgH"/>
    <property type="match status" value="1"/>
</dbReference>
<dbReference type="PROSITE" id="PS51257">
    <property type="entry name" value="PROKAR_LIPOPROTEIN"/>
    <property type="match status" value="1"/>
</dbReference>
<evidence type="ECO:0000255" key="1">
    <source>
        <dbReference type="HAMAP-Rule" id="MF_00415"/>
    </source>
</evidence>
<reference key="1">
    <citation type="submission" date="2008-08" db="EMBL/GenBank/DDBJ databases">
        <title>The complete genome sequence of Thermodesulfovibrio yellowstonii strain ATCC 51303 / DSM 11347 / YP87.</title>
        <authorList>
            <person name="Dodson R.J."/>
            <person name="Durkin A.S."/>
            <person name="Wu M."/>
            <person name="Eisen J."/>
            <person name="Sutton G."/>
        </authorList>
    </citation>
    <scope>NUCLEOTIDE SEQUENCE [LARGE SCALE GENOMIC DNA]</scope>
    <source>
        <strain>ATCC 51303 / DSM 11347 / YP87</strain>
    </source>
</reference>
<keyword id="KW-0975">Bacterial flagellum</keyword>
<keyword id="KW-0998">Cell outer membrane</keyword>
<keyword id="KW-0449">Lipoprotein</keyword>
<keyword id="KW-0472">Membrane</keyword>
<keyword id="KW-0564">Palmitate</keyword>
<keyword id="KW-1185">Reference proteome</keyword>
<keyword id="KW-0732">Signal</keyword>
<comment type="function">
    <text evidence="1">Assembles around the rod to form the L-ring and probably protects the motor/basal body from shearing forces during rotation.</text>
</comment>
<comment type="subunit">
    <text evidence="1">The basal body constitutes a major portion of the flagellar organelle and consists of four rings (L,P,S, and M) mounted on a central rod.</text>
</comment>
<comment type="subcellular location">
    <subcellularLocation>
        <location evidence="1">Cell outer membrane</location>
        <topology evidence="1">Lipid-anchor</topology>
    </subcellularLocation>
    <subcellularLocation>
        <location evidence="1">Bacterial flagellum basal body</location>
    </subcellularLocation>
</comment>
<comment type="similarity">
    <text evidence="1">Belongs to the FlgH family.</text>
</comment>
<proteinExistence type="inferred from homology"/>
<name>FLGH_THEYD</name>
<gene>
    <name evidence="1" type="primary">flgH</name>
    <name type="ordered locus">THEYE_A2059</name>
</gene>
<organism>
    <name type="scientific">Thermodesulfovibrio yellowstonii (strain ATCC 51303 / DSM 11347 / YP87)</name>
    <dbReference type="NCBI Taxonomy" id="289376"/>
    <lineage>
        <taxon>Bacteria</taxon>
        <taxon>Pseudomonadati</taxon>
        <taxon>Nitrospirota</taxon>
        <taxon>Thermodesulfovibrionia</taxon>
        <taxon>Thermodesulfovibrionales</taxon>
        <taxon>Thermodesulfovibrionaceae</taxon>
        <taxon>Thermodesulfovibrio</taxon>
    </lineage>
</organism>
<sequence>MRKLILISLCIFFLASCSELQEVRDIKNAGMPPKYYPEPPQTQVASEGSLWRNKASLYEDKKARRVNDLVTILINESTSAQKTASTTASRDSSTNYGLDTFFGMNTDFNIHNLPLINGFYKAGNVFSPSVKGSATSDFKGDGDTARTGKITGTITAKVVEVLPNGNLVIESRKEVIVNNEKEILVLRGIIRPDDISQSNTILSQYVADAQIYLVGEGTLGDKQSQGWLVRFLDKIWPF</sequence>
<accession>B5YIX2</accession>
<feature type="signal peptide" evidence="1">
    <location>
        <begin position="1"/>
        <end position="16"/>
    </location>
</feature>
<feature type="chain" id="PRO_1000134833" description="Flagellar L-ring protein">
    <location>
        <begin position="17"/>
        <end position="238"/>
    </location>
</feature>
<feature type="lipid moiety-binding region" description="N-palmitoyl cysteine" evidence="1">
    <location>
        <position position="17"/>
    </location>
</feature>
<feature type="lipid moiety-binding region" description="S-diacylglycerol cysteine" evidence="1">
    <location>
        <position position="17"/>
    </location>
</feature>
<protein>
    <recommendedName>
        <fullName evidence="1">Flagellar L-ring protein</fullName>
    </recommendedName>
    <alternativeName>
        <fullName evidence="1">Basal body L-ring protein</fullName>
    </alternativeName>
</protein>